<keyword id="KW-0028">Amino-acid biosynthesis</keyword>
<keyword id="KW-0055">Arginine biosynthesis</keyword>
<keyword id="KW-0963">Cytoplasm</keyword>
<keyword id="KW-0456">Lyase</keyword>
<keyword id="KW-1185">Reference proteome</keyword>
<protein>
    <recommendedName>
        <fullName evidence="1">Argininosuccinate lyase</fullName>
        <shortName evidence="1">ASAL</shortName>
        <ecNumber evidence="1">4.3.2.1</ecNumber>
    </recommendedName>
    <alternativeName>
        <fullName evidence="1">Arginosuccinase</fullName>
    </alternativeName>
</protein>
<name>ARLY_ACIC5</name>
<organism>
    <name type="scientific">Acidobacterium capsulatum (strain ATCC 51196 / DSM 11244 / BCRC 80197 / JCM 7670 / NBRC 15755 / NCIMB 13165 / 161)</name>
    <dbReference type="NCBI Taxonomy" id="240015"/>
    <lineage>
        <taxon>Bacteria</taxon>
        <taxon>Pseudomonadati</taxon>
        <taxon>Acidobacteriota</taxon>
        <taxon>Terriglobia</taxon>
        <taxon>Terriglobales</taxon>
        <taxon>Acidobacteriaceae</taxon>
        <taxon>Acidobacterium</taxon>
    </lineage>
</organism>
<sequence length="486" mass="53046">MKMWSGRFREPLDPAFDHWQRSLQFDWQLLPEEVAASKAHALALEAAGVLTAGEREALHNALDLVTSRFHAPDGSGPSWVMSNQEAEDIHHFVELQLVATVGDLGLKLHTGRSRNEQIATDLRLFVRSRAQMLQAYLGTWAEILVARAQQMGNAAMPAYTHLQRAEPVLVAHWLLAYAEMLLRDASRLEDCVRRLNYCPLGSGAVAGATLALDRGIASQALNFAAPTANSMDATSDRDFVLEFLQALTGIALHASRFAEEITLYATAEFGFVDLPEAYSTGSSAMPQKKNPDLTELVRAKVGRINGAAQAVTLLLKGLPLAYNKDMQETQEPLFQATIATHQMLHLLAKFTHALQFRTDHMQAACESGFLNAMAAATYLVHKGIPFRKAHEIVGHAVRLGLDKGCELAGLSLDELRSLSPEFGADFYDAVTLESTLDCHDVLGGTARAQVQASLEAMQRRTGDLVNARGRIDLGLSTVAEVSHADS</sequence>
<feature type="chain" id="PRO_1000116301" description="Argininosuccinate lyase">
    <location>
        <begin position="1"/>
        <end position="486"/>
    </location>
</feature>
<accession>C1F4E8</accession>
<gene>
    <name evidence="1" type="primary">argH</name>
    <name type="ordered locus">ACP_2991</name>
</gene>
<proteinExistence type="inferred from homology"/>
<comment type="catalytic activity">
    <reaction evidence="1">
        <text>2-(N(omega)-L-arginino)succinate = fumarate + L-arginine</text>
        <dbReference type="Rhea" id="RHEA:24020"/>
        <dbReference type="ChEBI" id="CHEBI:29806"/>
        <dbReference type="ChEBI" id="CHEBI:32682"/>
        <dbReference type="ChEBI" id="CHEBI:57472"/>
        <dbReference type="EC" id="4.3.2.1"/>
    </reaction>
</comment>
<comment type="pathway">
    <text evidence="1">Amino-acid biosynthesis; L-arginine biosynthesis; L-arginine from L-ornithine and carbamoyl phosphate: step 3/3.</text>
</comment>
<comment type="subcellular location">
    <subcellularLocation>
        <location evidence="1">Cytoplasm</location>
    </subcellularLocation>
</comment>
<comment type="similarity">
    <text evidence="1">Belongs to the lyase 1 family. Argininosuccinate lyase subfamily.</text>
</comment>
<evidence type="ECO:0000255" key="1">
    <source>
        <dbReference type="HAMAP-Rule" id="MF_00006"/>
    </source>
</evidence>
<reference key="1">
    <citation type="journal article" date="2009" name="Appl. Environ. Microbiol.">
        <title>Three genomes from the phylum Acidobacteria provide insight into the lifestyles of these microorganisms in soils.</title>
        <authorList>
            <person name="Ward N.L."/>
            <person name="Challacombe J.F."/>
            <person name="Janssen P.H."/>
            <person name="Henrissat B."/>
            <person name="Coutinho P.M."/>
            <person name="Wu M."/>
            <person name="Xie G."/>
            <person name="Haft D.H."/>
            <person name="Sait M."/>
            <person name="Badger J."/>
            <person name="Barabote R.D."/>
            <person name="Bradley B."/>
            <person name="Brettin T.S."/>
            <person name="Brinkac L.M."/>
            <person name="Bruce D."/>
            <person name="Creasy T."/>
            <person name="Daugherty S.C."/>
            <person name="Davidsen T.M."/>
            <person name="DeBoy R.T."/>
            <person name="Detter J.C."/>
            <person name="Dodson R.J."/>
            <person name="Durkin A.S."/>
            <person name="Ganapathy A."/>
            <person name="Gwinn-Giglio M."/>
            <person name="Han C.S."/>
            <person name="Khouri H."/>
            <person name="Kiss H."/>
            <person name="Kothari S.P."/>
            <person name="Madupu R."/>
            <person name="Nelson K.E."/>
            <person name="Nelson W.C."/>
            <person name="Paulsen I."/>
            <person name="Penn K."/>
            <person name="Ren Q."/>
            <person name="Rosovitz M.J."/>
            <person name="Selengut J.D."/>
            <person name="Shrivastava S."/>
            <person name="Sullivan S.A."/>
            <person name="Tapia R."/>
            <person name="Thompson L.S."/>
            <person name="Watkins K.L."/>
            <person name="Yang Q."/>
            <person name="Yu C."/>
            <person name="Zafar N."/>
            <person name="Zhou L."/>
            <person name="Kuske C.R."/>
        </authorList>
    </citation>
    <scope>NUCLEOTIDE SEQUENCE [LARGE SCALE GENOMIC DNA]</scope>
    <source>
        <strain>ATCC 51196 / DSM 11244 / BCRC 80197 / JCM 7670 / NBRC 15755 / NCIMB 13165 / 161</strain>
    </source>
</reference>
<dbReference type="EC" id="4.3.2.1" evidence="1"/>
<dbReference type="EMBL" id="CP001472">
    <property type="protein sequence ID" value="ACO34077.1"/>
    <property type="molecule type" value="Genomic_DNA"/>
</dbReference>
<dbReference type="RefSeq" id="WP_015898040.1">
    <property type="nucleotide sequence ID" value="NC_012483.1"/>
</dbReference>
<dbReference type="SMR" id="C1F4E8"/>
<dbReference type="FunCoup" id="C1F4E8">
    <property type="interactions" value="480"/>
</dbReference>
<dbReference type="STRING" id="240015.ACP_2991"/>
<dbReference type="KEGG" id="aca:ACP_2991"/>
<dbReference type="eggNOG" id="COG0165">
    <property type="taxonomic scope" value="Bacteria"/>
</dbReference>
<dbReference type="HOGENOM" id="CLU_027272_2_3_0"/>
<dbReference type="InParanoid" id="C1F4E8"/>
<dbReference type="OrthoDB" id="9769623at2"/>
<dbReference type="UniPathway" id="UPA00068">
    <property type="reaction ID" value="UER00114"/>
</dbReference>
<dbReference type="Proteomes" id="UP000002207">
    <property type="component" value="Chromosome"/>
</dbReference>
<dbReference type="GO" id="GO:0005829">
    <property type="term" value="C:cytosol"/>
    <property type="evidence" value="ECO:0007669"/>
    <property type="project" value="TreeGrafter"/>
</dbReference>
<dbReference type="GO" id="GO:0004056">
    <property type="term" value="F:argininosuccinate lyase activity"/>
    <property type="evidence" value="ECO:0007669"/>
    <property type="project" value="UniProtKB-UniRule"/>
</dbReference>
<dbReference type="GO" id="GO:0042450">
    <property type="term" value="P:arginine biosynthetic process via ornithine"/>
    <property type="evidence" value="ECO:0007669"/>
    <property type="project" value="InterPro"/>
</dbReference>
<dbReference type="GO" id="GO:0006526">
    <property type="term" value="P:L-arginine biosynthetic process"/>
    <property type="evidence" value="ECO:0007669"/>
    <property type="project" value="UniProtKB-UniRule"/>
</dbReference>
<dbReference type="CDD" id="cd01359">
    <property type="entry name" value="Argininosuccinate_lyase"/>
    <property type="match status" value="1"/>
</dbReference>
<dbReference type="FunFam" id="1.10.40.30:FF:000001">
    <property type="entry name" value="Argininosuccinate lyase"/>
    <property type="match status" value="1"/>
</dbReference>
<dbReference type="FunFam" id="1.20.200.10:FF:000015">
    <property type="entry name" value="argininosuccinate lyase isoform X2"/>
    <property type="match status" value="1"/>
</dbReference>
<dbReference type="Gene3D" id="1.10.40.30">
    <property type="entry name" value="Fumarase/aspartase (C-terminal domain)"/>
    <property type="match status" value="1"/>
</dbReference>
<dbReference type="Gene3D" id="1.20.200.10">
    <property type="entry name" value="Fumarase/aspartase (Central domain)"/>
    <property type="match status" value="1"/>
</dbReference>
<dbReference type="Gene3D" id="1.10.275.10">
    <property type="entry name" value="Fumarase/aspartase (N-terminal domain)"/>
    <property type="match status" value="1"/>
</dbReference>
<dbReference type="HAMAP" id="MF_00006">
    <property type="entry name" value="Arg_succ_lyase"/>
    <property type="match status" value="1"/>
</dbReference>
<dbReference type="InterPro" id="IPR029419">
    <property type="entry name" value="Arg_succ_lyase_C"/>
</dbReference>
<dbReference type="InterPro" id="IPR009049">
    <property type="entry name" value="Argininosuccinate_lyase"/>
</dbReference>
<dbReference type="InterPro" id="IPR024083">
    <property type="entry name" value="Fumarase/histidase_N"/>
</dbReference>
<dbReference type="InterPro" id="IPR020557">
    <property type="entry name" value="Fumarate_lyase_CS"/>
</dbReference>
<dbReference type="InterPro" id="IPR000362">
    <property type="entry name" value="Fumarate_lyase_fam"/>
</dbReference>
<dbReference type="InterPro" id="IPR022761">
    <property type="entry name" value="Fumarate_lyase_N"/>
</dbReference>
<dbReference type="InterPro" id="IPR008948">
    <property type="entry name" value="L-Aspartase-like"/>
</dbReference>
<dbReference type="NCBIfam" id="TIGR00838">
    <property type="entry name" value="argH"/>
    <property type="match status" value="1"/>
</dbReference>
<dbReference type="PANTHER" id="PTHR43814">
    <property type="entry name" value="ARGININOSUCCINATE LYASE"/>
    <property type="match status" value="1"/>
</dbReference>
<dbReference type="PANTHER" id="PTHR43814:SF1">
    <property type="entry name" value="ARGININOSUCCINATE LYASE"/>
    <property type="match status" value="1"/>
</dbReference>
<dbReference type="Pfam" id="PF14698">
    <property type="entry name" value="ASL_C2"/>
    <property type="match status" value="1"/>
</dbReference>
<dbReference type="Pfam" id="PF00206">
    <property type="entry name" value="Lyase_1"/>
    <property type="match status" value="1"/>
</dbReference>
<dbReference type="PRINTS" id="PR00145">
    <property type="entry name" value="ARGSUCLYASE"/>
</dbReference>
<dbReference type="PRINTS" id="PR00149">
    <property type="entry name" value="FUMRATELYASE"/>
</dbReference>
<dbReference type="SUPFAM" id="SSF48557">
    <property type="entry name" value="L-aspartase-like"/>
    <property type="match status" value="1"/>
</dbReference>
<dbReference type="PROSITE" id="PS00163">
    <property type="entry name" value="FUMARATE_LYASES"/>
    <property type="match status" value="1"/>
</dbReference>